<accession>Q4A6W2</accession>
<sequence length="199" mass="22688">MAKVLVLSGGLSEKEKSYSSQMLDLFVKTYKEVHPNDELEFVDLNTTKHAEVFLSRNTFATYWKDVESDKWIDKLKAADKVILSCSMTNFGPTAVVKNFIDSVAVANKTFSYKYSKKGDAVGLLDHLRVMIVTTQGAPKDWYLWGSHTNWLIGTWKFLGAKYVDTFELNGTKLSVFADKKPYDVVEEFRQDALEKAKQF</sequence>
<organism>
    <name type="scientific">Mycoplasmopsis synoviae (strain 53)</name>
    <name type="common">Mycoplasma synoviae</name>
    <dbReference type="NCBI Taxonomy" id="262723"/>
    <lineage>
        <taxon>Bacteria</taxon>
        <taxon>Bacillati</taxon>
        <taxon>Mycoplasmatota</taxon>
        <taxon>Mycoplasmoidales</taxon>
        <taxon>Metamycoplasmataceae</taxon>
        <taxon>Mycoplasmopsis</taxon>
    </lineage>
</organism>
<gene>
    <name evidence="1" type="primary">azoR</name>
    <name type="ordered locus">MS53_0088</name>
</gene>
<proteinExistence type="inferred from homology"/>
<feature type="chain" id="PRO_0000245939" description="FMN-dependent NADH:quinone oxidoreductase">
    <location>
        <begin position="1"/>
        <end position="199"/>
    </location>
</feature>
<feature type="binding site" evidence="1">
    <location>
        <begin position="17"/>
        <end position="19"/>
    </location>
    <ligand>
        <name>FMN</name>
        <dbReference type="ChEBI" id="CHEBI:58210"/>
    </ligand>
</feature>
<keyword id="KW-0285">Flavoprotein</keyword>
<keyword id="KW-0288">FMN</keyword>
<keyword id="KW-0520">NAD</keyword>
<keyword id="KW-0560">Oxidoreductase</keyword>
<keyword id="KW-1185">Reference proteome</keyword>
<name>AZOR_MYCS5</name>
<reference key="1">
    <citation type="journal article" date="2005" name="J. Bacteriol.">
        <title>Swine and poultry pathogens: the complete genome sequences of two strains of Mycoplasma hyopneumoniae and a strain of Mycoplasma synoviae.</title>
        <authorList>
            <person name="Vasconcelos A.T.R."/>
            <person name="Ferreira H.B."/>
            <person name="Bizarro C.V."/>
            <person name="Bonatto S.L."/>
            <person name="Carvalho M.O."/>
            <person name="Pinto P.M."/>
            <person name="Almeida D.F."/>
            <person name="Almeida L.G.P."/>
            <person name="Almeida R."/>
            <person name="Alves-Junior L."/>
            <person name="Assuncao E.N."/>
            <person name="Azevedo V.A.C."/>
            <person name="Bogo M.R."/>
            <person name="Brigido M.M."/>
            <person name="Brocchi M."/>
            <person name="Burity H.A."/>
            <person name="Camargo A.A."/>
            <person name="Camargo S.S."/>
            <person name="Carepo M.S."/>
            <person name="Carraro D.M."/>
            <person name="de Mattos Cascardo J.C."/>
            <person name="Castro L.A."/>
            <person name="Cavalcanti G."/>
            <person name="Chemale G."/>
            <person name="Collevatti R.G."/>
            <person name="Cunha C.W."/>
            <person name="Dallagiovanna B."/>
            <person name="Dambros B.P."/>
            <person name="Dellagostin O.A."/>
            <person name="Falcao C."/>
            <person name="Fantinatti-Garboggini F."/>
            <person name="Felipe M.S.S."/>
            <person name="Fiorentin L."/>
            <person name="Franco G.R."/>
            <person name="Freitas N.S.A."/>
            <person name="Frias D."/>
            <person name="Grangeiro T.B."/>
            <person name="Grisard E.C."/>
            <person name="Guimaraes C.T."/>
            <person name="Hungria M."/>
            <person name="Jardim S.N."/>
            <person name="Krieger M.A."/>
            <person name="Laurino J.P."/>
            <person name="Lima L.F.A."/>
            <person name="Lopes M.I."/>
            <person name="Loreto E.L.S."/>
            <person name="Madeira H.M.F."/>
            <person name="Manfio G.P."/>
            <person name="Maranhao A.Q."/>
            <person name="Martinkovics C.T."/>
            <person name="Medeiros S.R.B."/>
            <person name="Moreira M.A.M."/>
            <person name="Neiva M."/>
            <person name="Ramalho-Neto C.E."/>
            <person name="Nicolas M.F."/>
            <person name="Oliveira S.C."/>
            <person name="Paixao R.F.C."/>
            <person name="Pedrosa F.O."/>
            <person name="Pena S.D.J."/>
            <person name="Pereira M."/>
            <person name="Pereira-Ferrari L."/>
            <person name="Piffer I."/>
            <person name="Pinto L.S."/>
            <person name="Potrich D.P."/>
            <person name="Salim A.C.M."/>
            <person name="Santos F.R."/>
            <person name="Schmitt R."/>
            <person name="Schneider M.P.C."/>
            <person name="Schrank A."/>
            <person name="Schrank I.S."/>
            <person name="Schuck A.F."/>
            <person name="Seuanez H.N."/>
            <person name="Silva D.W."/>
            <person name="Silva R."/>
            <person name="Silva S.C."/>
            <person name="Soares C.M.A."/>
            <person name="Souza K.R.L."/>
            <person name="Souza R.C."/>
            <person name="Staats C.C."/>
            <person name="Steffens M.B.R."/>
            <person name="Teixeira S.M.R."/>
            <person name="Urmenyi T.P."/>
            <person name="Vainstein M.H."/>
            <person name="Zuccherato L.W."/>
            <person name="Simpson A.J.G."/>
            <person name="Zaha A."/>
        </authorList>
    </citation>
    <scope>NUCLEOTIDE SEQUENCE [LARGE SCALE GENOMIC DNA]</scope>
    <source>
        <strain>53</strain>
    </source>
</reference>
<dbReference type="EC" id="1.6.5.-" evidence="1"/>
<dbReference type="EC" id="1.7.1.17" evidence="1"/>
<dbReference type="EMBL" id="AE017245">
    <property type="protein sequence ID" value="AAZ43509.1"/>
    <property type="molecule type" value="Genomic_DNA"/>
</dbReference>
<dbReference type="RefSeq" id="WP_011283252.1">
    <property type="nucleotide sequence ID" value="NC_007294.1"/>
</dbReference>
<dbReference type="SMR" id="Q4A6W2"/>
<dbReference type="STRING" id="262723.MS53_0088"/>
<dbReference type="KEGG" id="msy:MS53_0088"/>
<dbReference type="eggNOG" id="COG1182">
    <property type="taxonomic scope" value="Bacteria"/>
</dbReference>
<dbReference type="HOGENOM" id="CLU_088964_2_0_14"/>
<dbReference type="OrthoDB" id="9805013at2"/>
<dbReference type="Proteomes" id="UP000000549">
    <property type="component" value="Chromosome"/>
</dbReference>
<dbReference type="GO" id="GO:0009055">
    <property type="term" value="F:electron transfer activity"/>
    <property type="evidence" value="ECO:0007669"/>
    <property type="project" value="UniProtKB-UniRule"/>
</dbReference>
<dbReference type="GO" id="GO:0010181">
    <property type="term" value="F:FMN binding"/>
    <property type="evidence" value="ECO:0007669"/>
    <property type="project" value="UniProtKB-UniRule"/>
</dbReference>
<dbReference type="GO" id="GO:0016652">
    <property type="term" value="F:oxidoreductase activity, acting on NAD(P)H as acceptor"/>
    <property type="evidence" value="ECO:0007669"/>
    <property type="project" value="UniProtKB-UniRule"/>
</dbReference>
<dbReference type="GO" id="GO:0016655">
    <property type="term" value="F:oxidoreductase activity, acting on NAD(P)H, quinone or similar compound as acceptor"/>
    <property type="evidence" value="ECO:0007669"/>
    <property type="project" value="InterPro"/>
</dbReference>
<dbReference type="Gene3D" id="3.40.50.360">
    <property type="match status" value="1"/>
</dbReference>
<dbReference type="HAMAP" id="MF_01216">
    <property type="entry name" value="Azoreductase_type1"/>
    <property type="match status" value="1"/>
</dbReference>
<dbReference type="InterPro" id="IPR003680">
    <property type="entry name" value="Flavodoxin_fold"/>
</dbReference>
<dbReference type="InterPro" id="IPR029039">
    <property type="entry name" value="Flavoprotein-like_sf"/>
</dbReference>
<dbReference type="InterPro" id="IPR050104">
    <property type="entry name" value="FMN-dep_NADH:Q_OxRdtase_AzoR1"/>
</dbReference>
<dbReference type="InterPro" id="IPR023048">
    <property type="entry name" value="NADH:quinone_OxRdtase_FMN_depd"/>
</dbReference>
<dbReference type="NCBIfam" id="NF002370">
    <property type="entry name" value="PRK01355.1"/>
    <property type="match status" value="1"/>
</dbReference>
<dbReference type="PANTHER" id="PTHR43741">
    <property type="entry name" value="FMN-DEPENDENT NADH-AZOREDUCTASE 1"/>
    <property type="match status" value="1"/>
</dbReference>
<dbReference type="PANTHER" id="PTHR43741:SF4">
    <property type="entry name" value="FMN-DEPENDENT NADH:QUINONE OXIDOREDUCTASE"/>
    <property type="match status" value="1"/>
</dbReference>
<dbReference type="Pfam" id="PF02525">
    <property type="entry name" value="Flavodoxin_2"/>
    <property type="match status" value="1"/>
</dbReference>
<dbReference type="SUPFAM" id="SSF52218">
    <property type="entry name" value="Flavoproteins"/>
    <property type="match status" value="1"/>
</dbReference>
<comment type="function">
    <text evidence="1">Quinone reductase that provides resistance to thiol-specific stress caused by electrophilic quinones.</text>
</comment>
<comment type="function">
    <text evidence="1">Also exhibits azoreductase activity. Catalyzes the reductive cleavage of the azo bond in aromatic azo compounds to the corresponding amines.</text>
</comment>
<comment type="catalytic activity">
    <reaction evidence="1">
        <text>2 a quinone + NADH + H(+) = 2 a 1,4-benzosemiquinone + NAD(+)</text>
        <dbReference type="Rhea" id="RHEA:65952"/>
        <dbReference type="ChEBI" id="CHEBI:15378"/>
        <dbReference type="ChEBI" id="CHEBI:57540"/>
        <dbReference type="ChEBI" id="CHEBI:57945"/>
        <dbReference type="ChEBI" id="CHEBI:132124"/>
        <dbReference type="ChEBI" id="CHEBI:134225"/>
    </reaction>
</comment>
<comment type="catalytic activity">
    <reaction evidence="1">
        <text>N,N-dimethyl-1,4-phenylenediamine + anthranilate + 2 NAD(+) = 2-(4-dimethylaminophenyl)diazenylbenzoate + 2 NADH + 2 H(+)</text>
        <dbReference type="Rhea" id="RHEA:55872"/>
        <dbReference type="ChEBI" id="CHEBI:15378"/>
        <dbReference type="ChEBI" id="CHEBI:15783"/>
        <dbReference type="ChEBI" id="CHEBI:16567"/>
        <dbReference type="ChEBI" id="CHEBI:57540"/>
        <dbReference type="ChEBI" id="CHEBI:57945"/>
        <dbReference type="ChEBI" id="CHEBI:71579"/>
        <dbReference type="EC" id="1.7.1.17"/>
    </reaction>
</comment>
<comment type="cofactor">
    <cofactor evidence="1">
        <name>FMN</name>
        <dbReference type="ChEBI" id="CHEBI:58210"/>
    </cofactor>
    <text evidence="1">Binds 1 FMN per subunit.</text>
</comment>
<comment type="subunit">
    <text evidence="1">Homodimer.</text>
</comment>
<comment type="similarity">
    <text evidence="1">Belongs to the azoreductase type 1 family.</text>
</comment>
<protein>
    <recommendedName>
        <fullName evidence="1">FMN-dependent NADH:quinone oxidoreductase</fullName>
        <ecNumber evidence="1">1.6.5.-</ecNumber>
    </recommendedName>
    <alternativeName>
        <fullName evidence="1">Azo-dye reductase</fullName>
    </alternativeName>
    <alternativeName>
        <fullName evidence="1">FMN-dependent NADH-azo compound oxidoreductase</fullName>
    </alternativeName>
    <alternativeName>
        <fullName evidence="1">FMN-dependent NADH-azoreductase</fullName>
        <ecNumber evidence="1">1.7.1.17</ecNumber>
    </alternativeName>
</protein>
<evidence type="ECO:0000255" key="1">
    <source>
        <dbReference type="HAMAP-Rule" id="MF_01216"/>
    </source>
</evidence>